<keyword id="KW-0210">Decarboxylase</keyword>
<keyword id="KW-0456">Lyase</keyword>
<keyword id="KW-0665">Pyrimidine biosynthesis</keyword>
<reference key="1">
    <citation type="journal article" date="2010" name="Genome Biol.">
        <title>Structure and dynamics of the pan-genome of Streptococcus pneumoniae and closely related species.</title>
        <authorList>
            <person name="Donati C."/>
            <person name="Hiller N.L."/>
            <person name="Tettelin H."/>
            <person name="Muzzi A."/>
            <person name="Croucher N.J."/>
            <person name="Angiuoli S.V."/>
            <person name="Oggioni M."/>
            <person name="Dunning Hotopp J.C."/>
            <person name="Hu F.Z."/>
            <person name="Riley D.R."/>
            <person name="Covacci A."/>
            <person name="Mitchell T.J."/>
            <person name="Bentley S.D."/>
            <person name="Kilian M."/>
            <person name="Ehrlich G.D."/>
            <person name="Rappuoli R."/>
            <person name="Moxon E.R."/>
            <person name="Masignani V."/>
        </authorList>
    </citation>
    <scope>NUCLEOTIDE SEQUENCE [LARGE SCALE GENOMIC DNA]</scope>
    <source>
        <strain>Hungary19A-6</strain>
    </source>
</reference>
<sequence>MREHRPIIALDFPSFEVVKEFLALFPAEESLYLKVGMELYYAAGPEIVSYLKGLGHSVFLDLKLHDIPNTVKSAMKILSQLGVDMTNVHAAGGVEMMKAAREGLGSQAKLIAVTQLTSTSEAQMQEFQNIQTSLQESVIHYAKKTAEAGLDGVVCSAQEVQVIKQATNPDFICLTPGIRPAGVAVGDQKRVMTPADAYQIGSDYIVVGRPITQAEDPVAAYHAIKDEWTQDWN</sequence>
<dbReference type="EC" id="4.1.1.23" evidence="1"/>
<dbReference type="EMBL" id="CP000936">
    <property type="protein sequence ID" value="ACA36671.1"/>
    <property type="molecule type" value="Genomic_DNA"/>
</dbReference>
<dbReference type="RefSeq" id="WP_001206724.1">
    <property type="nucleotide sequence ID" value="NC_010380.1"/>
</dbReference>
<dbReference type="SMR" id="B1IAM6"/>
<dbReference type="KEGG" id="spv:SPH_0785"/>
<dbReference type="HOGENOM" id="CLU_067069_1_1_9"/>
<dbReference type="UniPathway" id="UPA00070">
    <property type="reaction ID" value="UER00120"/>
</dbReference>
<dbReference type="Proteomes" id="UP000002163">
    <property type="component" value="Chromosome"/>
</dbReference>
<dbReference type="GO" id="GO:0005829">
    <property type="term" value="C:cytosol"/>
    <property type="evidence" value="ECO:0007669"/>
    <property type="project" value="TreeGrafter"/>
</dbReference>
<dbReference type="GO" id="GO:0004590">
    <property type="term" value="F:orotidine-5'-phosphate decarboxylase activity"/>
    <property type="evidence" value="ECO:0007669"/>
    <property type="project" value="UniProtKB-UniRule"/>
</dbReference>
<dbReference type="GO" id="GO:0006207">
    <property type="term" value="P:'de novo' pyrimidine nucleobase biosynthetic process"/>
    <property type="evidence" value="ECO:0007669"/>
    <property type="project" value="InterPro"/>
</dbReference>
<dbReference type="GO" id="GO:0044205">
    <property type="term" value="P:'de novo' UMP biosynthetic process"/>
    <property type="evidence" value="ECO:0007669"/>
    <property type="project" value="UniProtKB-UniRule"/>
</dbReference>
<dbReference type="CDD" id="cd04725">
    <property type="entry name" value="OMP_decarboxylase_like"/>
    <property type="match status" value="1"/>
</dbReference>
<dbReference type="FunFam" id="3.20.20.70:FF:000015">
    <property type="entry name" value="Orotidine 5'-phosphate decarboxylase"/>
    <property type="match status" value="1"/>
</dbReference>
<dbReference type="Gene3D" id="3.20.20.70">
    <property type="entry name" value="Aldolase class I"/>
    <property type="match status" value="1"/>
</dbReference>
<dbReference type="HAMAP" id="MF_01200_B">
    <property type="entry name" value="OMPdecase_type1_B"/>
    <property type="match status" value="1"/>
</dbReference>
<dbReference type="InterPro" id="IPR013785">
    <property type="entry name" value="Aldolase_TIM"/>
</dbReference>
<dbReference type="InterPro" id="IPR014732">
    <property type="entry name" value="OMPdecase"/>
</dbReference>
<dbReference type="InterPro" id="IPR018089">
    <property type="entry name" value="OMPdecase_AS"/>
</dbReference>
<dbReference type="InterPro" id="IPR047596">
    <property type="entry name" value="OMPdecase_bac"/>
</dbReference>
<dbReference type="InterPro" id="IPR001754">
    <property type="entry name" value="OMPdeCOase_dom"/>
</dbReference>
<dbReference type="InterPro" id="IPR011060">
    <property type="entry name" value="RibuloseP-bd_barrel"/>
</dbReference>
<dbReference type="NCBIfam" id="NF001273">
    <property type="entry name" value="PRK00230.1"/>
    <property type="match status" value="1"/>
</dbReference>
<dbReference type="NCBIfam" id="TIGR01740">
    <property type="entry name" value="pyrF"/>
    <property type="match status" value="1"/>
</dbReference>
<dbReference type="PANTHER" id="PTHR32119">
    <property type="entry name" value="OROTIDINE 5'-PHOSPHATE DECARBOXYLASE"/>
    <property type="match status" value="1"/>
</dbReference>
<dbReference type="PANTHER" id="PTHR32119:SF2">
    <property type="entry name" value="OROTIDINE 5'-PHOSPHATE DECARBOXYLASE"/>
    <property type="match status" value="1"/>
</dbReference>
<dbReference type="Pfam" id="PF00215">
    <property type="entry name" value="OMPdecase"/>
    <property type="match status" value="1"/>
</dbReference>
<dbReference type="SMART" id="SM00934">
    <property type="entry name" value="OMPdecase"/>
    <property type="match status" value="1"/>
</dbReference>
<dbReference type="SUPFAM" id="SSF51366">
    <property type="entry name" value="Ribulose-phoshate binding barrel"/>
    <property type="match status" value="1"/>
</dbReference>
<dbReference type="PROSITE" id="PS00156">
    <property type="entry name" value="OMPDECASE"/>
    <property type="match status" value="1"/>
</dbReference>
<comment type="function">
    <text evidence="1">Catalyzes the decarboxylation of orotidine 5'-monophosphate (OMP) to uridine 5'-monophosphate (UMP).</text>
</comment>
<comment type="catalytic activity">
    <reaction evidence="1">
        <text>orotidine 5'-phosphate + H(+) = UMP + CO2</text>
        <dbReference type="Rhea" id="RHEA:11596"/>
        <dbReference type="ChEBI" id="CHEBI:15378"/>
        <dbReference type="ChEBI" id="CHEBI:16526"/>
        <dbReference type="ChEBI" id="CHEBI:57538"/>
        <dbReference type="ChEBI" id="CHEBI:57865"/>
        <dbReference type="EC" id="4.1.1.23"/>
    </reaction>
</comment>
<comment type="pathway">
    <text evidence="1">Pyrimidine metabolism; UMP biosynthesis via de novo pathway; UMP from orotate: step 2/2.</text>
</comment>
<comment type="subunit">
    <text evidence="1">Homodimer.</text>
</comment>
<comment type="similarity">
    <text evidence="1">Belongs to the OMP decarboxylase family. Type 1 subfamily.</text>
</comment>
<proteinExistence type="inferred from homology"/>
<feature type="chain" id="PRO_1000138563" description="Orotidine 5'-phosphate decarboxylase">
    <location>
        <begin position="1"/>
        <end position="233"/>
    </location>
</feature>
<feature type="active site" description="Proton donor" evidence="1">
    <location>
        <position position="63"/>
    </location>
</feature>
<feature type="binding site" evidence="1">
    <location>
        <position position="11"/>
    </location>
    <ligand>
        <name>substrate</name>
    </ligand>
</feature>
<feature type="binding site" evidence="1">
    <location>
        <position position="34"/>
    </location>
    <ligand>
        <name>substrate</name>
    </ligand>
</feature>
<feature type="binding site" evidence="1">
    <location>
        <begin position="61"/>
        <end position="70"/>
    </location>
    <ligand>
        <name>substrate</name>
    </ligand>
</feature>
<feature type="binding site" evidence="1">
    <location>
        <position position="117"/>
    </location>
    <ligand>
        <name>substrate</name>
    </ligand>
</feature>
<feature type="binding site" evidence="1">
    <location>
        <position position="179"/>
    </location>
    <ligand>
        <name>substrate</name>
    </ligand>
</feature>
<feature type="binding site" evidence="1">
    <location>
        <position position="188"/>
    </location>
    <ligand>
        <name>substrate</name>
    </ligand>
</feature>
<feature type="binding site" evidence="1">
    <location>
        <position position="208"/>
    </location>
    <ligand>
        <name>substrate</name>
    </ligand>
</feature>
<feature type="binding site" evidence="1">
    <location>
        <position position="209"/>
    </location>
    <ligand>
        <name>substrate</name>
    </ligand>
</feature>
<organism>
    <name type="scientific">Streptococcus pneumoniae (strain Hungary19A-6)</name>
    <dbReference type="NCBI Taxonomy" id="487214"/>
    <lineage>
        <taxon>Bacteria</taxon>
        <taxon>Bacillati</taxon>
        <taxon>Bacillota</taxon>
        <taxon>Bacilli</taxon>
        <taxon>Lactobacillales</taxon>
        <taxon>Streptococcaceae</taxon>
        <taxon>Streptococcus</taxon>
    </lineage>
</organism>
<name>PYRF_STRPI</name>
<evidence type="ECO:0000255" key="1">
    <source>
        <dbReference type="HAMAP-Rule" id="MF_01200"/>
    </source>
</evidence>
<protein>
    <recommendedName>
        <fullName evidence="1">Orotidine 5'-phosphate decarboxylase</fullName>
        <ecNumber evidence="1">4.1.1.23</ecNumber>
    </recommendedName>
    <alternativeName>
        <fullName evidence="1">OMP decarboxylase</fullName>
        <shortName evidence="1">OMPDCase</shortName>
        <shortName evidence="1">OMPdecase</shortName>
    </alternativeName>
</protein>
<gene>
    <name evidence="1" type="primary">pyrF</name>
    <name type="ordered locus">SPH_0785</name>
</gene>
<accession>B1IAM6</accession>